<sequence>MQNKIQVKSVEKRENALIFCAENSEIEVKGLSARNHVLVDSDNLSFIYILENESSFIYVSIPHTCWEAMHEAMNNDVVMFVRVNDIEMELEGLKEEVEYLVENIEGNANYGEELVTAVEKVFL</sequence>
<comment type="similarity">
    <text evidence="1">Belongs to the UPF0738 family.</text>
</comment>
<name>Y1094_BACCZ</name>
<organism>
    <name type="scientific">Bacillus cereus (strain ZK / E33L)</name>
    <dbReference type="NCBI Taxonomy" id="288681"/>
    <lineage>
        <taxon>Bacteria</taxon>
        <taxon>Bacillati</taxon>
        <taxon>Bacillota</taxon>
        <taxon>Bacilli</taxon>
        <taxon>Bacillales</taxon>
        <taxon>Bacillaceae</taxon>
        <taxon>Bacillus</taxon>
        <taxon>Bacillus cereus group</taxon>
    </lineage>
</organism>
<gene>
    <name type="ordered locus">BCE33L1094</name>
</gene>
<evidence type="ECO:0000255" key="1">
    <source>
        <dbReference type="HAMAP-Rule" id="MF_01861"/>
    </source>
</evidence>
<accession>Q63EG7</accession>
<protein>
    <recommendedName>
        <fullName evidence="1">UPF0738 protein BCE33L1094</fullName>
    </recommendedName>
</protein>
<dbReference type="EMBL" id="CP000001">
    <property type="protein sequence ID" value="AAU19153.1"/>
    <property type="molecule type" value="Genomic_DNA"/>
</dbReference>
<dbReference type="RefSeq" id="WP_001180007.1">
    <property type="nucleotide sequence ID" value="NC_006274.1"/>
</dbReference>
<dbReference type="KEGG" id="bcz:BCE33L1094"/>
<dbReference type="PATRIC" id="fig|288681.22.peg.4469"/>
<dbReference type="Proteomes" id="UP000002612">
    <property type="component" value="Chromosome"/>
</dbReference>
<dbReference type="HAMAP" id="MF_01861">
    <property type="entry name" value="UPF0738"/>
    <property type="match status" value="1"/>
</dbReference>
<dbReference type="InterPro" id="IPR020908">
    <property type="entry name" value="UPF0738"/>
</dbReference>
<dbReference type="Pfam" id="PF19785">
    <property type="entry name" value="UPF0738"/>
    <property type="match status" value="1"/>
</dbReference>
<feature type="chain" id="PRO_0000369644" description="UPF0738 protein BCE33L1094">
    <location>
        <begin position="1"/>
        <end position="123"/>
    </location>
</feature>
<reference key="1">
    <citation type="journal article" date="2006" name="J. Bacteriol.">
        <title>Pathogenomic sequence analysis of Bacillus cereus and Bacillus thuringiensis isolates closely related to Bacillus anthracis.</title>
        <authorList>
            <person name="Han C.S."/>
            <person name="Xie G."/>
            <person name="Challacombe J.F."/>
            <person name="Altherr M.R."/>
            <person name="Bhotika S.S."/>
            <person name="Bruce D."/>
            <person name="Campbell C.S."/>
            <person name="Campbell M.L."/>
            <person name="Chen J."/>
            <person name="Chertkov O."/>
            <person name="Cleland C."/>
            <person name="Dimitrijevic M."/>
            <person name="Doggett N.A."/>
            <person name="Fawcett J.J."/>
            <person name="Glavina T."/>
            <person name="Goodwin L.A."/>
            <person name="Hill K.K."/>
            <person name="Hitchcock P."/>
            <person name="Jackson P.J."/>
            <person name="Keim P."/>
            <person name="Kewalramani A.R."/>
            <person name="Longmire J."/>
            <person name="Lucas S."/>
            <person name="Malfatti S."/>
            <person name="McMurry K."/>
            <person name="Meincke L.J."/>
            <person name="Misra M."/>
            <person name="Moseman B.L."/>
            <person name="Mundt M."/>
            <person name="Munk A.C."/>
            <person name="Okinaka R.T."/>
            <person name="Parson-Quintana B."/>
            <person name="Reilly L.P."/>
            <person name="Richardson P."/>
            <person name="Robinson D.L."/>
            <person name="Rubin E."/>
            <person name="Saunders E."/>
            <person name="Tapia R."/>
            <person name="Tesmer J.G."/>
            <person name="Thayer N."/>
            <person name="Thompson L.S."/>
            <person name="Tice H."/>
            <person name="Ticknor L.O."/>
            <person name="Wills P.L."/>
            <person name="Brettin T.S."/>
            <person name="Gilna P."/>
        </authorList>
    </citation>
    <scope>NUCLEOTIDE SEQUENCE [LARGE SCALE GENOMIC DNA]</scope>
    <source>
        <strain>ZK / E33L</strain>
    </source>
</reference>
<proteinExistence type="inferred from homology"/>